<dbReference type="EC" id="2.7.4.6" evidence="1"/>
<dbReference type="EMBL" id="CP000936">
    <property type="protein sequence ID" value="ACA36245.1"/>
    <property type="molecule type" value="Genomic_DNA"/>
</dbReference>
<dbReference type="RefSeq" id="WP_000438289.1">
    <property type="nucleotide sequence ID" value="NC_010380.1"/>
</dbReference>
<dbReference type="SMR" id="B1I8R2"/>
<dbReference type="KEGG" id="spv:SPH_2100"/>
<dbReference type="HOGENOM" id="CLU_060216_6_3_9"/>
<dbReference type="Proteomes" id="UP000002163">
    <property type="component" value="Chromosome"/>
</dbReference>
<dbReference type="GO" id="GO:0005737">
    <property type="term" value="C:cytoplasm"/>
    <property type="evidence" value="ECO:0007669"/>
    <property type="project" value="UniProtKB-SubCell"/>
</dbReference>
<dbReference type="GO" id="GO:0005524">
    <property type="term" value="F:ATP binding"/>
    <property type="evidence" value="ECO:0007669"/>
    <property type="project" value="UniProtKB-UniRule"/>
</dbReference>
<dbReference type="GO" id="GO:0046872">
    <property type="term" value="F:metal ion binding"/>
    <property type="evidence" value="ECO:0007669"/>
    <property type="project" value="UniProtKB-KW"/>
</dbReference>
<dbReference type="GO" id="GO:0004550">
    <property type="term" value="F:nucleoside diphosphate kinase activity"/>
    <property type="evidence" value="ECO:0007669"/>
    <property type="project" value="UniProtKB-UniRule"/>
</dbReference>
<dbReference type="GO" id="GO:0006241">
    <property type="term" value="P:CTP biosynthetic process"/>
    <property type="evidence" value="ECO:0007669"/>
    <property type="project" value="UniProtKB-UniRule"/>
</dbReference>
<dbReference type="GO" id="GO:0006183">
    <property type="term" value="P:GTP biosynthetic process"/>
    <property type="evidence" value="ECO:0007669"/>
    <property type="project" value="UniProtKB-UniRule"/>
</dbReference>
<dbReference type="GO" id="GO:0006228">
    <property type="term" value="P:UTP biosynthetic process"/>
    <property type="evidence" value="ECO:0007669"/>
    <property type="project" value="UniProtKB-UniRule"/>
</dbReference>
<dbReference type="CDD" id="cd04413">
    <property type="entry name" value="NDPk_I"/>
    <property type="match status" value="1"/>
</dbReference>
<dbReference type="FunFam" id="3.30.70.141:FF:000013">
    <property type="entry name" value="Nucleoside diphosphate kinase"/>
    <property type="match status" value="1"/>
</dbReference>
<dbReference type="Gene3D" id="3.30.70.141">
    <property type="entry name" value="Nucleoside diphosphate kinase-like domain"/>
    <property type="match status" value="1"/>
</dbReference>
<dbReference type="HAMAP" id="MF_00451">
    <property type="entry name" value="NDP_kinase"/>
    <property type="match status" value="1"/>
</dbReference>
<dbReference type="InterPro" id="IPR034907">
    <property type="entry name" value="NDK-like_dom"/>
</dbReference>
<dbReference type="InterPro" id="IPR036850">
    <property type="entry name" value="NDK-like_dom_sf"/>
</dbReference>
<dbReference type="InterPro" id="IPR001564">
    <property type="entry name" value="Nucleoside_diP_kinase"/>
</dbReference>
<dbReference type="InterPro" id="IPR023005">
    <property type="entry name" value="Nucleoside_diP_kinase_AS"/>
</dbReference>
<dbReference type="NCBIfam" id="NF001908">
    <property type="entry name" value="PRK00668.1"/>
    <property type="match status" value="1"/>
</dbReference>
<dbReference type="PANTHER" id="PTHR11349">
    <property type="entry name" value="NUCLEOSIDE DIPHOSPHATE KINASE"/>
    <property type="match status" value="1"/>
</dbReference>
<dbReference type="Pfam" id="PF00334">
    <property type="entry name" value="NDK"/>
    <property type="match status" value="1"/>
</dbReference>
<dbReference type="PRINTS" id="PR01243">
    <property type="entry name" value="NUCDPKINASE"/>
</dbReference>
<dbReference type="SMART" id="SM00562">
    <property type="entry name" value="NDK"/>
    <property type="match status" value="1"/>
</dbReference>
<dbReference type="SUPFAM" id="SSF54919">
    <property type="entry name" value="Nucleoside diphosphate kinase, NDK"/>
    <property type="match status" value="1"/>
</dbReference>
<dbReference type="PROSITE" id="PS00469">
    <property type="entry name" value="NDPK"/>
    <property type="match status" value="1"/>
</dbReference>
<dbReference type="PROSITE" id="PS51374">
    <property type="entry name" value="NDPK_LIKE"/>
    <property type="match status" value="1"/>
</dbReference>
<feature type="chain" id="PRO_1000125023" description="Nucleoside diphosphate kinase">
    <location>
        <begin position="1"/>
        <end position="137"/>
    </location>
</feature>
<feature type="active site" description="Pros-phosphohistidine intermediate" evidence="1">
    <location>
        <position position="121"/>
    </location>
</feature>
<feature type="binding site" evidence="1">
    <location>
        <position position="9"/>
    </location>
    <ligand>
        <name>ATP</name>
        <dbReference type="ChEBI" id="CHEBI:30616"/>
    </ligand>
</feature>
<feature type="binding site" evidence="1">
    <location>
        <position position="58"/>
    </location>
    <ligand>
        <name>ATP</name>
        <dbReference type="ChEBI" id="CHEBI:30616"/>
    </ligand>
</feature>
<feature type="binding site" evidence="1">
    <location>
        <position position="86"/>
    </location>
    <ligand>
        <name>ATP</name>
        <dbReference type="ChEBI" id="CHEBI:30616"/>
    </ligand>
</feature>
<feature type="binding site" evidence="1">
    <location>
        <position position="92"/>
    </location>
    <ligand>
        <name>ATP</name>
        <dbReference type="ChEBI" id="CHEBI:30616"/>
    </ligand>
</feature>
<feature type="binding site" evidence="1">
    <location>
        <position position="103"/>
    </location>
    <ligand>
        <name>ATP</name>
        <dbReference type="ChEBI" id="CHEBI:30616"/>
    </ligand>
</feature>
<feature type="binding site" evidence="1">
    <location>
        <position position="113"/>
    </location>
    <ligand>
        <name>ATP</name>
        <dbReference type="ChEBI" id="CHEBI:30616"/>
    </ligand>
</feature>
<keyword id="KW-0067">ATP-binding</keyword>
<keyword id="KW-0963">Cytoplasm</keyword>
<keyword id="KW-0418">Kinase</keyword>
<keyword id="KW-0460">Magnesium</keyword>
<keyword id="KW-0479">Metal-binding</keyword>
<keyword id="KW-0546">Nucleotide metabolism</keyword>
<keyword id="KW-0547">Nucleotide-binding</keyword>
<keyword id="KW-0597">Phosphoprotein</keyword>
<keyword id="KW-0808">Transferase</keyword>
<gene>
    <name evidence="1" type="primary">ndk</name>
    <name type="ordered locus">SPH_2100</name>
</gene>
<comment type="function">
    <text evidence="1">Major role in the synthesis of nucleoside triphosphates other than ATP. The ATP gamma phosphate is transferred to the NDP beta phosphate via a ping-pong mechanism, using a phosphorylated active-site intermediate.</text>
</comment>
<comment type="catalytic activity">
    <reaction evidence="1">
        <text>a 2'-deoxyribonucleoside 5'-diphosphate + ATP = a 2'-deoxyribonucleoside 5'-triphosphate + ADP</text>
        <dbReference type="Rhea" id="RHEA:44640"/>
        <dbReference type="ChEBI" id="CHEBI:30616"/>
        <dbReference type="ChEBI" id="CHEBI:61560"/>
        <dbReference type="ChEBI" id="CHEBI:73316"/>
        <dbReference type="ChEBI" id="CHEBI:456216"/>
        <dbReference type="EC" id="2.7.4.6"/>
    </reaction>
</comment>
<comment type="catalytic activity">
    <reaction evidence="1">
        <text>a ribonucleoside 5'-diphosphate + ATP = a ribonucleoside 5'-triphosphate + ADP</text>
        <dbReference type="Rhea" id="RHEA:18113"/>
        <dbReference type="ChEBI" id="CHEBI:30616"/>
        <dbReference type="ChEBI" id="CHEBI:57930"/>
        <dbReference type="ChEBI" id="CHEBI:61557"/>
        <dbReference type="ChEBI" id="CHEBI:456216"/>
        <dbReference type="EC" id="2.7.4.6"/>
    </reaction>
</comment>
<comment type="cofactor">
    <cofactor evidence="1">
        <name>Mg(2+)</name>
        <dbReference type="ChEBI" id="CHEBI:18420"/>
    </cofactor>
</comment>
<comment type="subunit">
    <text evidence="1">Homotetramer.</text>
</comment>
<comment type="subcellular location">
    <subcellularLocation>
        <location evidence="1">Cytoplasm</location>
    </subcellularLocation>
</comment>
<comment type="similarity">
    <text evidence="1">Belongs to the NDK family.</text>
</comment>
<organism>
    <name type="scientific">Streptococcus pneumoniae (strain Hungary19A-6)</name>
    <dbReference type="NCBI Taxonomy" id="487214"/>
    <lineage>
        <taxon>Bacteria</taxon>
        <taxon>Bacillati</taxon>
        <taxon>Bacillota</taxon>
        <taxon>Bacilli</taxon>
        <taxon>Lactobacillales</taxon>
        <taxon>Streptococcaceae</taxon>
        <taxon>Streptococcus</taxon>
    </lineage>
</organism>
<name>NDK_STRPI</name>
<protein>
    <recommendedName>
        <fullName evidence="1">Nucleoside diphosphate kinase</fullName>
        <shortName evidence="1">NDK</shortName>
        <shortName evidence="1">NDP kinase</shortName>
        <ecNumber evidence="1">2.7.4.6</ecNumber>
    </recommendedName>
    <alternativeName>
        <fullName evidence="1">Nucleoside-2-P kinase</fullName>
    </alternativeName>
</protein>
<accession>B1I8R2</accession>
<evidence type="ECO:0000255" key="1">
    <source>
        <dbReference type="HAMAP-Rule" id="MF_00451"/>
    </source>
</evidence>
<proteinExistence type="inferred from homology"/>
<reference key="1">
    <citation type="journal article" date="2010" name="Genome Biol.">
        <title>Structure and dynamics of the pan-genome of Streptococcus pneumoniae and closely related species.</title>
        <authorList>
            <person name="Donati C."/>
            <person name="Hiller N.L."/>
            <person name="Tettelin H."/>
            <person name="Muzzi A."/>
            <person name="Croucher N.J."/>
            <person name="Angiuoli S.V."/>
            <person name="Oggioni M."/>
            <person name="Dunning Hotopp J.C."/>
            <person name="Hu F.Z."/>
            <person name="Riley D.R."/>
            <person name="Covacci A."/>
            <person name="Mitchell T.J."/>
            <person name="Bentley S.D."/>
            <person name="Kilian M."/>
            <person name="Ehrlich G.D."/>
            <person name="Rappuoli R."/>
            <person name="Moxon E.R."/>
            <person name="Masignani V."/>
        </authorList>
    </citation>
    <scope>NUCLEOTIDE SEQUENCE [LARGE SCALE GENOMIC DNA]</scope>
    <source>
        <strain>Hungary19A-6</strain>
    </source>
</reference>
<sequence>MEQTFFIIKPDGVKRGLVGEVLKRIEQRGFTIEKLEFRSQVSEELIDQHYQDLVGQSFYPPIREFMTSGPVLVGVISGPKVIETWRTMMGATRPEEALPGTIRGDFAKAAGENEIIQNVVHGSDSEESAKREIALWF</sequence>